<accession>Q851F9</accession>
<accession>A0A0P0W2J2</accession>
<feature type="transit peptide" description="Chloroplast" evidence="2">
    <location>
        <begin position="1"/>
        <end position="54"/>
    </location>
</feature>
<feature type="chain" id="PRO_0000428651" description="Probable zinc metalloprotease EGY3, chloroplastic">
    <location>
        <begin position="55"/>
        <end position="586"/>
    </location>
</feature>
<feature type="transmembrane region" description="Helical" evidence="2">
    <location>
        <begin position="287"/>
        <end position="307"/>
    </location>
</feature>
<feature type="transmembrane region" description="Helical" evidence="2">
    <location>
        <begin position="318"/>
        <end position="338"/>
    </location>
</feature>
<feature type="transmembrane region" description="Helical" evidence="2">
    <location>
        <begin position="389"/>
        <end position="409"/>
    </location>
</feature>
<feature type="transmembrane region" description="Helical" evidence="2">
    <location>
        <begin position="427"/>
        <end position="447"/>
    </location>
</feature>
<feature type="transmembrane region" description="Helical" evidence="2">
    <location>
        <begin position="454"/>
        <end position="474"/>
    </location>
</feature>
<feature type="transmembrane region" description="Helical" evidence="2">
    <location>
        <begin position="506"/>
        <end position="526"/>
    </location>
</feature>
<feature type="transmembrane region" description="Helical" evidence="2">
    <location>
        <begin position="550"/>
        <end position="570"/>
    </location>
</feature>
<feature type="region of interest" description="Disordered" evidence="3">
    <location>
        <begin position="13"/>
        <end position="32"/>
    </location>
</feature>
<feature type="region of interest" description="Disordered" evidence="3">
    <location>
        <begin position="58"/>
        <end position="122"/>
    </location>
</feature>
<feature type="coiled-coil region" evidence="2">
    <location>
        <begin position="103"/>
        <end position="195"/>
    </location>
</feature>
<feature type="compositionally biased region" description="Basic and acidic residues" evidence="3">
    <location>
        <begin position="61"/>
        <end position="73"/>
    </location>
</feature>
<feature type="sequence conflict" description="In Ref. 6; AK108046." evidence="4" ref="6">
    <original>S</original>
    <variation>G</variation>
    <location>
        <position position="574"/>
    </location>
</feature>
<protein>
    <recommendedName>
        <fullName>Probable zinc metalloprotease EGY3, chloroplastic</fullName>
        <ecNumber>3.4.24.-</ecNumber>
    </recommendedName>
    <alternativeName>
        <fullName>Protein ETHYLENE-DEPENDENT GRAVITROPISM-DEFICIENT AND YELLOW-GREEN 3</fullName>
        <shortName>OsEGY3</shortName>
    </alternativeName>
</protein>
<comment type="function">
    <text evidence="1">Probable membrane-associated metalloprotease that may be involved in chloroplast development.</text>
</comment>
<comment type="subcellular location">
    <subcellularLocation>
        <location evidence="4">Plastid</location>
        <location evidence="4">Chloroplast membrane</location>
        <topology evidence="4">Multi-pass membrane protein</topology>
    </subcellularLocation>
</comment>
<comment type="similarity">
    <text evidence="4">Belongs to the peptidase M50B family.</text>
</comment>
<reference key="1">
    <citation type="journal article" date="2005" name="Genome Res.">
        <title>Sequence, annotation, and analysis of synteny between rice chromosome 3 and diverged grass species.</title>
        <authorList>
            <consortium name="The rice chromosome 3 sequencing consortium"/>
            <person name="Buell C.R."/>
            <person name="Yuan Q."/>
            <person name="Ouyang S."/>
            <person name="Liu J."/>
            <person name="Zhu W."/>
            <person name="Wang A."/>
            <person name="Maiti R."/>
            <person name="Haas B."/>
            <person name="Wortman J."/>
            <person name="Pertea M."/>
            <person name="Jones K.M."/>
            <person name="Kim M."/>
            <person name="Overton L."/>
            <person name="Tsitrin T."/>
            <person name="Fadrosh D."/>
            <person name="Bera J."/>
            <person name="Weaver B."/>
            <person name="Jin S."/>
            <person name="Johri S."/>
            <person name="Reardon M."/>
            <person name="Webb K."/>
            <person name="Hill J."/>
            <person name="Moffat K."/>
            <person name="Tallon L."/>
            <person name="Van Aken S."/>
            <person name="Lewis M."/>
            <person name="Utterback T."/>
            <person name="Feldblyum T."/>
            <person name="Zismann V."/>
            <person name="Iobst S."/>
            <person name="Hsiao J."/>
            <person name="de Vazeille A.R."/>
            <person name="Salzberg S.L."/>
            <person name="White O."/>
            <person name="Fraser C.M."/>
            <person name="Yu Y."/>
            <person name="Kim H."/>
            <person name="Rambo T."/>
            <person name="Currie J."/>
            <person name="Collura K."/>
            <person name="Kernodle-Thompson S."/>
            <person name="Wei F."/>
            <person name="Kudrna K."/>
            <person name="Ammiraju J.S.S."/>
            <person name="Luo M."/>
            <person name="Goicoechea J.L."/>
            <person name="Wing R.A."/>
            <person name="Henry D."/>
            <person name="Oates R."/>
            <person name="Palmer M."/>
            <person name="Pries G."/>
            <person name="Saski C."/>
            <person name="Simmons J."/>
            <person name="Soderlund C."/>
            <person name="Nelson W."/>
            <person name="de la Bastide M."/>
            <person name="Spiegel L."/>
            <person name="Nascimento L."/>
            <person name="Huang E."/>
            <person name="Preston R."/>
            <person name="Zutavern T."/>
            <person name="Palmer L."/>
            <person name="O'Shaughnessy A."/>
            <person name="Dike S."/>
            <person name="McCombie W.R."/>
            <person name="Minx P."/>
            <person name="Cordum H."/>
            <person name="Wilson R."/>
            <person name="Jin W."/>
            <person name="Lee H.R."/>
            <person name="Jiang J."/>
            <person name="Jackson S."/>
        </authorList>
    </citation>
    <scope>NUCLEOTIDE SEQUENCE [LARGE SCALE GENOMIC DNA]</scope>
    <source>
        <strain>cv. Nipponbare</strain>
    </source>
</reference>
<reference key="2">
    <citation type="journal article" date="2005" name="Nature">
        <title>The map-based sequence of the rice genome.</title>
        <authorList>
            <consortium name="International rice genome sequencing project (IRGSP)"/>
        </authorList>
    </citation>
    <scope>NUCLEOTIDE SEQUENCE [LARGE SCALE GENOMIC DNA]</scope>
    <source>
        <strain>cv. Nipponbare</strain>
    </source>
</reference>
<reference key="3">
    <citation type="journal article" date="2008" name="Nucleic Acids Res.">
        <title>The rice annotation project database (RAP-DB): 2008 update.</title>
        <authorList>
            <consortium name="The rice annotation project (RAP)"/>
        </authorList>
    </citation>
    <scope>GENOME REANNOTATION</scope>
    <source>
        <strain>cv. Nipponbare</strain>
    </source>
</reference>
<reference key="4">
    <citation type="journal article" date="2013" name="Rice">
        <title>Improvement of the Oryza sativa Nipponbare reference genome using next generation sequence and optical map data.</title>
        <authorList>
            <person name="Kawahara Y."/>
            <person name="de la Bastide M."/>
            <person name="Hamilton J.P."/>
            <person name="Kanamori H."/>
            <person name="McCombie W.R."/>
            <person name="Ouyang S."/>
            <person name="Schwartz D.C."/>
            <person name="Tanaka T."/>
            <person name="Wu J."/>
            <person name="Zhou S."/>
            <person name="Childs K.L."/>
            <person name="Davidson R.M."/>
            <person name="Lin H."/>
            <person name="Quesada-Ocampo L."/>
            <person name="Vaillancourt B."/>
            <person name="Sakai H."/>
            <person name="Lee S.S."/>
            <person name="Kim J."/>
            <person name="Numa H."/>
            <person name="Itoh T."/>
            <person name="Buell C.R."/>
            <person name="Matsumoto T."/>
        </authorList>
    </citation>
    <scope>GENOME REANNOTATION</scope>
    <source>
        <strain>cv. Nipponbare</strain>
    </source>
</reference>
<reference key="5">
    <citation type="journal article" date="2005" name="PLoS Biol.">
        <title>The genomes of Oryza sativa: a history of duplications.</title>
        <authorList>
            <person name="Yu J."/>
            <person name="Wang J."/>
            <person name="Lin W."/>
            <person name="Li S."/>
            <person name="Li H."/>
            <person name="Zhou J."/>
            <person name="Ni P."/>
            <person name="Dong W."/>
            <person name="Hu S."/>
            <person name="Zeng C."/>
            <person name="Zhang J."/>
            <person name="Zhang Y."/>
            <person name="Li R."/>
            <person name="Xu Z."/>
            <person name="Li S."/>
            <person name="Li X."/>
            <person name="Zheng H."/>
            <person name="Cong L."/>
            <person name="Lin L."/>
            <person name="Yin J."/>
            <person name="Geng J."/>
            <person name="Li G."/>
            <person name="Shi J."/>
            <person name="Liu J."/>
            <person name="Lv H."/>
            <person name="Li J."/>
            <person name="Wang J."/>
            <person name="Deng Y."/>
            <person name="Ran L."/>
            <person name="Shi X."/>
            <person name="Wang X."/>
            <person name="Wu Q."/>
            <person name="Li C."/>
            <person name="Ren X."/>
            <person name="Wang J."/>
            <person name="Wang X."/>
            <person name="Li D."/>
            <person name="Liu D."/>
            <person name="Zhang X."/>
            <person name="Ji Z."/>
            <person name="Zhao W."/>
            <person name="Sun Y."/>
            <person name="Zhang Z."/>
            <person name="Bao J."/>
            <person name="Han Y."/>
            <person name="Dong L."/>
            <person name="Ji J."/>
            <person name="Chen P."/>
            <person name="Wu S."/>
            <person name="Liu J."/>
            <person name="Xiao Y."/>
            <person name="Bu D."/>
            <person name="Tan J."/>
            <person name="Yang L."/>
            <person name="Ye C."/>
            <person name="Zhang J."/>
            <person name="Xu J."/>
            <person name="Zhou Y."/>
            <person name="Yu Y."/>
            <person name="Zhang B."/>
            <person name="Zhuang S."/>
            <person name="Wei H."/>
            <person name="Liu B."/>
            <person name="Lei M."/>
            <person name="Yu H."/>
            <person name="Li Y."/>
            <person name="Xu H."/>
            <person name="Wei S."/>
            <person name="He X."/>
            <person name="Fang L."/>
            <person name="Zhang Z."/>
            <person name="Zhang Y."/>
            <person name="Huang X."/>
            <person name="Su Z."/>
            <person name="Tong W."/>
            <person name="Li J."/>
            <person name="Tong Z."/>
            <person name="Li S."/>
            <person name="Ye J."/>
            <person name="Wang L."/>
            <person name="Fang L."/>
            <person name="Lei T."/>
            <person name="Chen C.-S."/>
            <person name="Chen H.-C."/>
            <person name="Xu Z."/>
            <person name="Li H."/>
            <person name="Huang H."/>
            <person name="Zhang F."/>
            <person name="Xu H."/>
            <person name="Li N."/>
            <person name="Zhao C."/>
            <person name="Li S."/>
            <person name="Dong L."/>
            <person name="Huang Y."/>
            <person name="Li L."/>
            <person name="Xi Y."/>
            <person name="Qi Q."/>
            <person name="Li W."/>
            <person name="Zhang B."/>
            <person name="Hu W."/>
            <person name="Zhang Y."/>
            <person name="Tian X."/>
            <person name="Jiao Y."/>
            <person name="Liang X."/>
            <person name="Jin J."/>
            <person name="Gao L."/>
            <person name="Zheng W."/>
            <person name="Hao B."/>
            <person name="Liu S.-M."/>
            <person name="Wang W."/>
            <person name="Yuan L."/>
            <person name="Cao M."/>
            <person name="McDermott J."/>
            <person name="Samudrala R."/>
            <person name="Wang J."/>
            <person name="Wong G.K.-S."/>
            <person name="Yang H."/>
        </authorList>
    </citation>
    <scope>NUCLEOTIDE SEQUENCE [LARGE SCALE GENOMIC DNA]</scope>
    <source>
        <strain>cv. Nipponbare</strain>
    </source>
</reference>
<reference key="6">
    <citation type="journal article" date="2003" name="Science">
        <title>Collection, mapping, and annotation of over 28,000 cDNA clones from japonica rice.</title>
        <authorList>
            <consortium name="The rice full-length cDNA consortium"/>
        </authorList>
    </citation>
    <scope>NUCLEOTIDE SEQUENCE [LARGE SCALE MRNA]</scope>
    <source>
        <strain>cv. Nipponbare</strain>
    </source>
</reference>
<reference key="7">
    <citation type="journal article" date="2005" name="Plant J.">
        <title>EGY1 encodes a membrane-associated and ATP-independent metalloprotease that is required for chloroplast development.</title>
        <authorList>
            <person name="Chen G."/>
            <person name="Bi Y.R."/>
            <person name="Li N."/>
        </authorList>
    </citation>
    <scope>GENE FAMILY</scope>
</reference>
<keyword id="KW-0150">Chloroplast</keyword>
<keyword id="KW-0175">Coiled coil</keyword>
<keyword id="KW-0378">Hydrolase</keyword>
<keyword id="KW-0472">Membrane</keyword>
<keyword id="KW-0482">Metalloprotease</keyword>
<keyword id="KW-0934">Plastid</keyword>
<keyword id="KW-0645">Protease</keyword>
<keyword id="KW-1185">Reference proteome</keyword>
<keyword id="KW-0809">Transit peptide</keyword>
<keyword id="KW-0812">Transmembrane</keyword>
<keyword id="KW-1133">Transmembrane helix</keyword>
<name>EGY3_ORYSJ</name>
<organism>
    <name type="scientific">Oryza sativa subsp. japonica</name>
    <name type="common">Rice</name>
    <dbReference type="NCBI Taxonomy" id="39947"/>
    <lineage>
        <taxon>Eukaryota</taxon>
        <taxon>Viridiplantae</taxon>
        <taxon>Streptophyta</taxon>
        <taxon>Embryophyta</taxon>
        <taxon>Tracheophyta</taxon>
        <taxon>Spermatophyta</taxon>
        <taxon>Magnoliopsida</taxon>
        <taxon>Liliopsida</taxon>
        <taxon>Poales</taxon>
        <taxon>Poaceae</taxon>
        <taxon>BOP clade</taxon>
        <taxon>Oryzoideae</taxon>
        <taxon>Oryzeae</taxon>
        <taxon>Oryzinae</taxon>
        <taxon>Oryza</taxon>
        <taxon>Oryza sativa</taxon>
    </lineage>
</organism>
<proteinExistence type="evidence at transcript level"/>
<dbReference type="EC" id="3.4.24.-"/>
<dbReference type="EMBL" id="AC120983">
    <property type="protein sequence ID" value="AAO38476.1"/>
    <property type="molecule type" value="Genomic_DNA"/>
</dbReference>
<dbReference type="EMBL" id="DP000009">
    <property type="protein sequence ID" value="ABF98676.1"/>
    <property type="molecule type" value="Genomic_DNA"/>
</dbReference>
<dbReference type="EMBL" id="AP008209">
    <property type="protein sequence ID" value="BAF13065.1"/>
    <property type="molecule type" value="Genomic_DNA"/>
</dbReference>
<dbReference type="EMBL" id="AP014959">
    <property type="protein sequence ID" value="BAS86198.1"/>
    <property type="molecule type" value="Genomic_DNA"/>
</dbReference>
<dbReference type="EMBL" id="CM000140">
    <property type="protein sequence ID" value="EAZ28457.1"/>
    <property type="molecule type" value="Genomic_DNA"/>
</dbReference>
<dbReference type="EMBL" id="AK108046">
    <property type="status" value="NOT_ANNOTATED_CDS"/>
    <property type="molecule type" value="mRNA"/>
</dbReference>
<dbReference type="RefSeq" id="XP_015627827.1">
    <property type="nucleotide sequence ID" value="XM_015772341.1"/>
</dbReference>
<dbReference type="FunCoup" id="Q851F9">
    <property type="interactions" value="41"/>
</dbReference>
<dbReference type="STRING" id="39947.Q851F9"/>
<dbReference type="PaxDb" id="39947-Q851F9"/>
<dbReference type="EnsemblPlants" id="Os03t0729000-01">
    <property type="protein sequence ID" value="Os03t0729000-01"/>
    <property type="gene ID" value="Os03g0729000"/>
</dbReference>
<dbReference type="Gramene" id="Os03t0729000-01">
    <property type="protein sequence ID" value="Os03t0729000-01"/>
    <property type="gene ID" value="Os03g0729000"/>
</dbReference>
<dbReference type="KEGG" id="dosa:Os03g0729000"/>
<dbReference type="eggNOG" id="ENOG502QQ7R">
    <property type="taxonomic scope" value="Eukaryota"/>
</dbReference>
<dbReference type="HOGENOM" id="CLU_032693_0_0_1"/>
<dbReference type="InParanoid" id="Q851F9"/>
<dbReference type="OMA" id="MPRVIRI"/>
<dbReference type="OrthoDB" id="2016505at2759"/>
<dbReference type="Proteomes" id="UP000000763">
    <property type="component" value="Chromosome 3"/>
</dbReference>
<dbReference type="Proteomes" id="UP000007752">
    <property type="component" value="Chromosome 3"/>
</dbReference>
<dbReference type="Proteomes" id="UP000059680">
    <property type="component" value="Chromosome 3"/>
</dbReference>
<dbReference type="GO" id="GO:0031969">
    <property type="term" value="C:chloroplast membrane"/>
    <property type="evidence" value="ECO:0007669"/>
    <property type="project" value="UniProtKB-SubCell"/>
</dbReference>
<dbReference type="GO" id="GO:0008237">
    <property type="term" value="F:metallopeptidase activity"/>
    <property type="evidence" value="ECO:0007669"/>
    <property type="project" value="UniProtKB-KW"/>
</dbReference>
<dbReference type="GO" id="GO:0006508">
    <property type="term" value="P:proteolysis"/>
    <property type="evidence" value="ECO:0007669"/>
    <property type="project" value="UniProtKB-KW"/>
</dbReference>
<dbReference type="CDD" id="cd06160">
    <property type="entry name" value="S2P-M50_like_2"/>
    <property type="match status" value="1"/>
</dbReference>
<dbReference type="InterPro" id="IPR044838">
    <property type="entry name" value="EGY1-like"/>
</dbReference>
<dbReference type="PANTHER" id="PTHR31412:SF2">
    <property type="entry name" value="ZINC METALLOPEPTIDASE EGY3, CHLOROPLASTIC-RELATED"/>
    <property type="match status" value="1"/>
</dbReference>
<dbReference type="PANTHER" id="PTHR31412">
    <property type="entry name" value="ZINC METALLOPROTEASE EGY1"/>
    <property type="match status" value="1"/>
</dbReference>
<gene>
    <name type="primary">EGY3</name>
    <name type="ordered locus">Os03g0729000</name>
    <name type="ordered locus">LOC_Os03g51920</name>
    <name type="ORF">OsJ_12438</name>
    <name type="ORF">OSJNBb0011H13.3</name>
</gene>
<sequence length="586" mass="62795">MASSSLVTSLLFSSSSSSNTATSTSSRRSFSLFSKNQYCKPRPLRRSSSRLLVRCSLQQQQEEKAAPAAESHHAGGGQDDAATASHHAVEGENGVADADGGGVKKSKEELEEEEQQEVDWRSDEEFKRFMGNPSIEAAIKLEKKRADRKLRELDREPDANPLAGLLRGLARGQLAREKERLELAENTFKALDLNKLKSCFGYDTFFAVDVRRFGDGGIFIGNLRKPVEEVRPKLEKKIAEAAGTDVTLWFMEEKNDDITKQVCMVQPKAEIDLQLEITKLSTPWGYLSAVALAVTTFGTIAIMSGFFLKPGATFDDYVSDVLPLFAGFLSILGVSEIATRLTAARYGVKLSPSFLVPSNWTGCLGVMNNYESLLPNKKALFDIPVARAASAYLTSVALAVSAFVSDGSLNGGKNALFVRPEFFYNNPLLSFVQAVIGPYADELGNVLPNAVEGVGVPVDPLAFAGLLGIVVTSLNLLPCGRLEGGRIAQALFGRGAAAVLSFATSVALGAGAIIGGSVLCLAWGLFATFVRGGEEIPAQDEITPLGSERYAWGLVLAVVCLLTLFPNGGGTYSSDFLGAPFFRGGI</sequence>
<evidence type="ECO:0000250" key="1"/>
<evidence type="ECO:0000255" key="2"/>
<evidence type="ECO:0000256" key="3">
    <source>
        <dbReference type="SAM" id="MobiDB-lite"/>
    </source>
</evidence>
<evidence type="ECO:0000305" key="4"/>